<comment type="function">
    <text evidence="1">Forms part of the ribosomal stalk which helps the ribosome interact with GTP-bound translation factors. Is thus essential for accurate translation.</text>
</comment>
<comment type="subunit">
    <text evidence="1">Homodimer. Part of the ribosomal stalk of the 50S ribosomal subunit. Forms a multimeric L10(L12)X complex, where L10 forms an elongated spine to which 2 to 4 L12 dimers bind in a sequential fashion. Binds GTP-bound translation factors.</text>
</comment>
<comment type="similarity">
    <text evidence="1">Belongs to the bacterial ribosomal protein bL12 family.</text>
</comment>
<dbReference type="EMBL" id="CU207366">
    <property type="protein sequence ID" value="CAL67335.1"/>
    <property type="molecule type" value="Genomic_DNA"/>
</dbReference>
<dbReference type="RefSeq" id="WP_011710238.1">
    <property type="nucleotide sequence ID" value="NC_008571.1"/>
</dbReference>
<dbReference type="SMR" id="A0M3Z0"/>
<dbReference type="STRING" id="411154.GFO_2371"/>
<dbReference type="KEGG" id="gfo:GFO_2371"/>
<dbReference type="eggNOG" id="COG0222">
    <property type="taxonomic scope" value="Bacteria"/>
</dbReference>
<dbReference type="HOGENOM" id="CLU_086499_3_1_10"/>
<dbReference type="OrthoDB" id="9811748at2"/>
<dbReference type="Proteomes" id="UP000000755">
    <property type="component" value="Chromosome"/>
</dbReference>
<dbReference type="GO" id="GO:0022625">
    <property type="term" value="C:cytosolic large ribosomal subunit"/>
    <property type="evidence" value="ECO:0007669"/>
    <property type="project" value="TreeGrafter"/>
</dbReference>
<dbReference type="GO" id="GO:0003729">
    <property type="term" value="F:mRNA binding"/>
    <property type="evidence" value="ECO:0007669"/>
    <property type="project" value="TreeGrafter"/>
</dbReference>
<dbReference type="GO" id="GO:0003735">
    <property type="term" value="F:structural constituent of ribosome"/>
    <property type="evidence" value="ECO:0007669"/>
    <property type="project" value="InterPro"/>
</dbReference>
<dbReference type="GO" id="GO:0006412">
    <property type="term" value="P:translation"/>
    <property type="evidence" value="ECO:0007669"/>
    <property type="project" value="UniProtKB-UniRule"/>
</dbReference>
<dbReference type="CDD" id="cd00387">
    <property type="entry name" value="Ribosomal_L7_L12"/>
    <property type="match status" value="1"/>
</dbReference>
<dbReference type="FunFam" id="1.20.5.710:FF:000011">
    <property type="entry name" value="50S ribosomal protein L7/L12"/>
    <property type="match status" value="1"/>
</dbReference>
<dbReference type="FunFam" id="3.30.1390.10:FF:000001">
    <property type="entry name" value="50S ribosomal protein L7/L12"/>
    <property type="match status" value="1"/>
</dbReference>
<dbReference type="Gene3D" id="3.30.1390.10">
    <property type="match status" value="1"/>
</dbReference>
<dbReference type="Gene3D" id="1.20.5.710">
    <property type="entry name" value="Single helix bin"/>
    <property type="match status" value="1"/>
</dbReference>
<dbReference type="HAMAP" id="MF_00368">
    <property type="entry name" value="Ribosomal_bL12"/>
    <property type="match status" value="1"/>
</dbReference>
<dbReference type="InterPro" id="IPR000206">
    <property type="entry name" value="Ribosomal_bL12"/>
</dbReference>
<dbReference type="InterPro" id="IPR013823">
    <property type="entry name" value="Ribosomal_bL12_C"/>
</dbReference>
<dbReference type="InterPro" id="IPR014719">
    <property type="entry name" value="Ribosomal_bL12_C/ClpS-like"/>
</dbReference>
<dbReference type="InterPro" id="IPR008932">
    <property type="entry name" value="Ribosomal_bL12_oligo"/>
</dbReference>
<dbReference type="InterPro" id="IPR036235">
    <property type="entry name" value="Ribosomal_bL12_oligo_N_sf"/>
</dbReference>
<dbReference type="NCBIfam" id="TIGR00855">
    <property type="entry name" value="L12"/>
    <property type="match status" value="1"/>
</dbReference>
<dbReference type="PANTHER" id="PTHR45987">
    <property type="entry name" value="39S RIBOSOMAL PROTEIN L12"/>
    <property type="match status" value="1"/>
</dbReference>
<dbReference type="PANTHER" id="PTHR45987:SF4">
    <property type="entry name" value="LARGE RIBOSOMAL SUBUNIT PROTEIN BL12M"/>
    <property type="match status" value="1"/>
</dbReference>
<dbReference type="Pfam" id="PF00542">
    <property type="entry name" value="Ribosomal_L12"/>
    <property type="match status" value="1"/>
</dbReference>
<dbReference type="Pfam" id="PF16320">
    <property type="entry name" value="Ribosomal_L12_N"/>
    <property type="match status" value="1"/>
</dbReference>
<dbReference type="SUPFAM" id="SSF54736">
    <property type="entry name" value="ClpS-like"/>
    <property type="match status" value="1"/>
</dbReference>
<dbReference type="SUPFAM" id="SSF48300">
    <property type="entry name" value="Ribosomal protein L7/12, oligomerisation (N-terminal) domain"/>
    <property type="match status" value="1"/>
</dbReference>
<name>RL7_CHRFK</name>
<sequence length="124" mass="12799">MADLKDFAEQLVNLTVKEVNELADILKEEYGIEPAAAAVAVAGGGAAGGEEAEEQTEFDVILTAPGGSKLAVVKLVKELTGLGLKDAKALVDEAPKPVKEGVAKDEAEALKAQLEEAGAEVELK</sequence>
<proteinExistence type="inferred from homology"/>
<evidence type="ECO:0000255" key="1">
    <source>
        <dbReference type="HAMAP-Rule" id="MF_00368"/>
    </source>
</evidence>
<evidence type="ECO:0000305" key="2"/>
<keyword id="KW-0687">Ribonucleoprotein</keyword>
<keyword id="KW-0689">Ribosomal protein</keyword>
<accession>A0M3Z0</accession>
<protein>
    <recommendedName>
        <fullName evidence="1">Large ribosomal subunit protein bL12</fullName>
    </recommendedName>
    <alternativeName>
        <fullName evidence="2">50S ribosomal protein L7/L12</fullName>
    </alternativeName>
</protein>
<reference key="1">
    <citation type="journal article" date="2006" name="Environ. Microbiol.">
        <title>Whole genome analysis of the marine Bacteroidetes'Gramella forsetii' reveals adaptations to degradation of polymeric organic matter.</title>
        <authorList>
            <person name="Bauer M."/>
            <person name="Kube M."/>
            <person name="Teeling H."/>
            <person name="Richter M."/>
            <person name="Lombardot T."/>
            <person name="Allers E."/>
            <person name="Wuerdemann C.A."/>
            <person name="Quast C."/>
            <person name="Kuhl H."/>
            <person name="Knaust F."/>
            <person name="Woebken D."/>
            <person name="Bischof K."/>
            <person name="Mussmann M."/>
            <person name="Choudhuri J.V."/>
            <person name="Meyer F."/>
            <person name="Reinhardt R."/>
            <person name="Amann R.I."/>
            <person name="Gloeckner F.O."/>
        </authorList>
    </citation>
    <scope>NUCLEOTIDE SEQUENCE [LARGE SCALE GENOMIC DNA]</scope>
    <source>
        <strain>DSM 17595 / CGMCC 1.15422 / KT0803</strain>
    </source>
</reference>
<organism>
    <name type="scientific">Christiangramia forsetii (strain DSM 17595 / CGMCC 1.15422 / KT0803)</name>
    <name type="common">Gramella forsetii</name>
    <dbReference type="NCBI Taxonomy" id="411154"/>
    <lineage>
        <taxon>Bacteria</taxon>
        <taxon>Pseudomonadati</taxon>
        <taxon>Bacteroidota</taxon>
        <taxon>Flavobacteriia</taxon>
        <taxon>Flavobacteriales</taxon>
        <taxon>Flavobacteriaceae</taxon>
        <taxon>Christiangramia</taxon>
    </lineage>
</organism>
<gene>
    <name evidence="1" type="primary">rplL</name>
    <name type="ordered locus">GFO_2371</name>
</gene>
<feature type="chain" id="PRO_1000007014" description="Large ribosomal subunit protein bL12">
    <location>
        <begin position="1"/>
        <end position="124"/>
    </location>
</feature>